<reference key="1">
    <citation type="submission" date="2006-09" db="EMBL/GenBank/DDBJ databases">
        <authorList>
            <consortium name="The Klebsiella pneumonia Genome Sequencing Project"/>
            <person name="McClelland M."/>
            <person name="Sanderson E.K."/>
            <person name="Spieth J."/>
            <person name="Clifton W.S."/>
            <person name="Latreille P."/>
            <person name="Sabo A."/>
            <person name="Pepin K."/>
            <person name="Bhonagiri V."/>
            <person name="Porwollik S."/>
            <person name="Ali J."/>
            <person name="Wilson R.K."/>
        </authorList>
    </citation>
    <scope>NUCLEOTIDE SEQUENCE [LARGE SCALE GENOMIC DNA]</scope>
    <source>
        <strain>ATCC 700721 / MGH 78578</strain>
    </source>
</reference>
<keyword id="KW-0460">Magnesium</keyword>
<keyword id="KW-0479">Metal-binding</keyword>
<keyword id="KW-0784">Thiamine biosynthesis</keyword>
<keyword id="KW-0808">Transferase</keyword>
<sequence>MYQPDFPPVPFRLGLYPVVDSVAWIERLLEAGVRTLQLRIKDRRDSEVEDDVIAAIALGRRYHARLFINDYWQLAIKHQAYGVHLGQEDLETTDLSAIRQAGLRLGVSTHDDMEIDVALAARPSYIALGHVFPTQTKQMPSAPQGLEQLARHIQRLADYPTVAIGGISLEKAPGVLATGVGSIAVVSAITQAADWRAATDQLLALAGAGDE</sequence>
<gene>
    <name evidence="1" type="primary">thiE</name>
    <name type="ordered locus">KPN78578_43100</name>
    <name type="ORF">KPN_04375</name>
</gene>
<accession>A6TGQ0</accession>
<feature type="chain" id="PRO_1000008144" description="Thiamine-phosphate synthase">
    <location>
        <begin position="1"/>
        <end position="211"/>
    </location>
</feature>
<feature type="binding site" evidence="1">
    <location>
        <begin position="37"/>
        <end position="41"/>
    </location>
    <ligand>
        <name>4-amino-2-methyl-5-(diphosphooxymethyl)pyrimidine</name>
        <dbReference type="ChEBI" id="CHEBI:57841"/>
    </ligand>
</feature>
<feature type="binding site" evidence="1">
    <location>
        <position position="69"/>
    </location>
    <ligand>
        <name>4-amino-2-methyl-5-(diphosphooxymethyl)pyrimidine</name>
        <dbReference type="ChEBI" id="CHEBI:57841"/>
    </ligand>
</feature>
<feature type="binding site" evidence="1">
    <location>
        <position position="70"/>
    </location>
    <ligand>
        <name>Mg(2+)</name>
        <dbReference type="ChEBI" id="CHEBI:18420"/>
    </ligand>
</feature>
<feature type="binding site" evidence="1">
    <location>
        <position position="89"/>
    </location>
    <ligand>
        <name>Mg(2+)</name>
        <dbReference type="ChEBI" id="CHEBI:18420"/>
    </ligand>
</feature>
<feature type="binding site" evidence="1">
    <location>
        <position position="108"/>
    </location>
    <ligand>
        <name>4-amino-2-methyl-5-(diphosphooxymethyl)pyrimidine</name>
        <dbReference type="ChEBI" id="CHEBI:57841"/>
    </ligand>
</feature>
<feature type="binding site" evidence="1">
    <location>
        <begin position="134"/>
        <end position="136"/>
    </location>
    <ligand>
        <name>2-[(2R,5Z)-2-carboxy-4-methylthiazol-5(2H)-ylidene]ethyl phosphate</name>
        <dbReference type="ChEBI" id="CHEBI:62899"/>
    </ligand>
</feature>
<feature type="binding site" evidence="1">
    <location>
        <position position="137"/>
    </location>
    <ligand>
        <name>4-amino-2-methyl-5-(diphosphooxymethyl)pyrimidine</name>
        <dbReference type="ChEBI" id="CHEBI:57841"/>
    </ligand>
</feature>
<feature type="binding site" evidence="1">
    <location>
        <position position="166"/>
    </location>
    <ligand>
        <name>2-[(2R,5Z)-2-carboxy-4-methylthiazol-5(2H)-ylidene]ethyl phosphate</name>
        <dbReference type="ChEBI" id="CHEBI:62899"/>
    </ligand>
</feature>
<feature type="binding site" evidence="1">
    <location>
        <begin position="186"/>
        <end position="187"/>
    </location>
    <ligand>
        <name>2-[(2R,5Z)-2-carboxy-4-methylthiazol-5(2H)-ylidene]ethyl phosphate</name>
        <dbReference type="ChEBI" id="CHEBI:62899"/>
    </ligand>
</feature>
<evidence type="ECO:0000255" key="1">
    <source>
        <dbReference type="HAMAP-Rule" id="MF_00097"/>
    </source>
</evidence>
<organism>
    <name type="scientific">Klebsiella pneumoniae subsp. pneumoniae (strain ATCC 700721 / MGH 78578)</name>
    <dbReference type="NCBI Taxonomy" id="272620"/>
    <lineage>
        <taxon>Bacteria</taxon>
        <taxon>Pseudomonadati</taxon>
        <taxon>Pseudomonadota</taxon>
        <taxon>Gammaproteobacteria</taxon>
        <taxon>Enterobacterales</taxon>
        <taxon>Enterobacteriaceae</taxon>
        <taxon>Klebsiella/Raoultella group</taxon>
        <taxon>Klebsiella</taxon>
        <taxon>Klebsiella pneumoniae complex</taxon>
    </lineage>
</organism>
<comment type="function">
    <text evidence="1">Condenses 4-methyl-5-(beta-hydroxyethyl)thiazole monophosphate (THZ-P) and 2-methyl-4-amino-5-hydroxymethyl pyrimidine pyrophosphate (HMP-PP) to form thiamine monophosphate (TMP).</text>
</comment>
<comment type="catalytic activity">
    <reaction evidence="1">
        <text>2-[(2R,5Z)-2-carboxy-4-methylthiazol-5(2H)-ylidene]ethyl phosphate + 4-amino-2-methyl-5-(diphosphooxymethyl)pyrimidine + 2 H(+) = thiamine phosphate + CO2 + diphosphate</text>
        <dbReference type="Rhea" id="RHEA:47844"/>
        <dbReference type="ChEBI" id="CHEBI:15378"/>
        <dbReference type="ChEBI" id="CHEBI:16526"/>
        <dbReference type="ChEBI" id="CHEBI:33019"/>
        <dbReference type="ChEBI" id="CHEBI:37575"/>
        <dbReference type="ChEBI" id="CHEBI:57841"/>
        <dbReference type="ChEBI" id="CHEBI:62899"/>
        <dbReference type="EC" id="2.5.1.3"/>
    </reaction>
</comment>
<comment type="catalytic activity">
    <reaction evidence="1">
        <text>2-(2-carboxy-4-methylthiazol-5-yl)ethyl phosphate + 4-amino-2-methyl-5-(diphosphooxymethyl)pyrimidine + 2 H(+) = thiamine phosphate + CO2 + diphosphate</text>
        <dbReference type="Rhea" id="RHEA:47848"/>
        <dbReference type="ChEBI" id="CHEBI:15378"/>
        <dbReference type="ChEBI" id="CHEBI:16526"/>
        <dbReference type="ChEBI" id="CHEBI:33019"/>
        <dbReference type="ChEBI" id="CHEBI:37575"/>
        <dbReference type="ChEBI" id="CHEBI:57841"/>
        <dbReference type="ChEBI" id="CHEBI:62890"/>
        <dbReference type="EC" id="2.5.1.3"/>
    </reaction>
</comment>
<comment type="catalytic activity">
    <reaction evidence="1">
        <text>4-methyl-5-(2-phosphooxyethyl)-thiazole + 4-amino-2-methyl-5-(diphosphooxymethyl)pyrimidine + H(+) = thiamine phosphate + diphosphate</text>
        <dbReference type="Rhea" id="RHEA:22328"/>
        <dbReference type="ChEBI" id="CHEBI:15378"/>
        <dbReference type="ChEBI" id="CHEBI:33019"/>
        <dbReference type="ChEBI" id="CHEBI:37575"/>
        <dbReference type="ChEBI" id="CHEBI:57841"/>
        <dbReference type="ChEBI" id="CHEBI:58296"/>
        <dbReference type="EC" id="2.5.1.3"/>
    </reaction>
</comment>
<comment type="cofactor">
    <cofactor evidence="1">
        <name>Mg(2+)</name>
        <dbReference type="ChEBI" id="CHEBI:18420"/>
    </cofactor>
    <text evidence="1">Binds 1 Mg(2+) ion per subunit.</text>
</comment>
<comment type="pathway">
    <text evidence="1">Cofactor biosynthesis; thiamine diphosphate biosynthesis; thiamine phosphate from 4-amino-2-methyl-5-diphosphomethylpyrimidine and 4-methyl-5-(2-phosphoethyl)-thiazole: step 1/1.</text>
</comment>
<comment type="similarity">
    <text evidence="1">Belongs to the thiamine-phosphate synthase family.</text>
</comment>
<proteinExistence type="inferred from homology"/>
<dbReference type="EC" id="2.5.1.3" evidence="1"/>
<dbReference type="EMBL" id="CP000647">
    <property type="protein sequence ID" value="ABR79734.1"/>
    <property type="molecule type" value="Genomic_DNA"/>
</dbReference>
<dbReference type="RefSeq" id="WP_004152310.1">
    <property type="nucleotide sequence ID" value="NC_009648.1"/>
</dbReference>
<dbReference type="SMR" id="A6TGQ0"/>
<dbReference type="STRING" id="272620.KPN_04375"/>
<dbReference type="PaxDb" id="272620-KPN_04375"/>
<dbReference type="EnsemblBacteria" id="ABR79734">
    <property type="protein sequence ID" value="ABR79734"/>
    <property type="gene ID" value="KPN_04375"/>
</dbReference>
<dbReference type="KEGG" id="kpn:KPN_04375"/>
<dbReference type="HOGENOM" id="CLU_018272_3_3_6"/>
<dbReference type="UniPathway" id="UPA00060">
    <property type="reaction ID" value="UER00141"/>
</dbReference>
<dbReference type="Proteomes" id="UP000000265">
    <property type="component" value="Chromosome"/>
</dbReference>
<dbReference type="GO" id="GO:0005737">
    <property type="term" value="C:cytoplasm"/>
    <property type="evidence" value="ECO:0007669"/>
    <property type="project" value="TreeGrafter"/>
</dbReference>
<dbReference type="GO" id="GO:0000287">
    <property type="term" value="F:magnesium ion binding"/>
    <property type="evidence" value="ECO:0007669"/>
    <property type="project" value="UniProtKB-UniRule"/>
</dbReference>
<dbReference type="GO" id="GO:0004789">
    <property type="term" value="F:thiamine-phosphate diphosphorylase activity"/>
    <property type="evidence" value="ECO:0007669"/>
    <property type="project" value="UniProtKB-UniRule"/>
</dbReference>
<dbReference type="GO" id="GO:0009228">
    <property type="term" value="P:thiamine biosynthetic process"/>
    <property type="evidence" value="ECO:0007669"/>
    <property type="project" value="UniProtKB-KW"/>
</dbReference>
<dbReference type="GO" id="GO:0009229">
    <property type="term" value="P:thiamine diphosphate biosynthetic process"/>
    <property type="evidence" value="ECO:0007669"/>
    <property type="project" value="UniProtKB-UniRule"/>
</dbReference>
<dbReference type="CDD" id="cd00564">
    <property type="entry name" value="TMP_TenI"/>
    <property type="match status" value="1"/>
</dbReference>
<dbReference type="FunFam" id="3.20.20.70:FF:000064">
    <property type="entry name" value="Thiamine-phosphate synthase"/>
    <property type="match status" value="1"/>
</dbReference>
<dbReference type="Gene3D" id="3.20.20.70">
    <property type="entry name" value="Aldolase class I"/>
    <property type="match status" value="1"/>
</dbReference>
<dbReference type="HAMAP" id="MF_00097">
    <property type="entry name" value="TMP_synthase"/>
    <property type="match status" value="1"/>
</dbReference>
<dbReference type="InterPro" id="IPR013785">
    <property type="entry name" value="Aldolase_TIM"/>
</dbReference>
<dbReference type="InterPro" id="IPR036206">
    <property type="entry name" value="ThiamineP_synth_sf"/>
</dbReference>
<dbReference type="InterPro" id="IPR022998">
    <property type="entry name" value="ThiamineP_synth_TenI"/>
</dbReference>
<dbReference type="InterPro" id="IPR034291">
    <property type="entry name" value="TMP_synthase"/>
</dbReference>
<dbReference type="NCBIfam" id="NF002904">
    <property type="entry name" value="PRK03512.1"/>
    <property type="match status" value="1"/>
</dbReference>
<dbReference type="NCBIfam" id="TIGR00693">
    <property type="entry name" value="thiE"/>
    <property type="match status" value="1"/>
</dbReference>
<dbReference type="PANTHER" id="PTHR20857">
    <property type="entry name" value="THIAMINE-PHOSPHATE PYROPHOSPHORYLASE"/>
    <property type="match status" value="1"/>
</dbReference>
<dbReference type="PANTHER" id="PTHR20857:SF15">
    <property type="entry name" value="THIAMINE-PHOSPHATE SYNTHASE"/>
    <property type="match status" value="1"/>
</dbReference>
<dbReference type="Pfam" id="PF02581">
    <property type="entry name" value="TMP-TENI"/>
    <property type="match status" value="1"/>
</dbReference>
<dbReference type="SUPFAM" id="SSF51391">
    <property type="entry name" value="Thiamin phosphate synthase"/>
    <property type="match status" value="1"/>
</dbReference>
<name>THIE_KLEP7</name>
<protein>
    <recommendedName>
        <fullName evidence="1">Thiamine-phosphate synthase</fullName>
        <shortName evidence="1">TP synthase</shortName>
        <shortName evidence="1">TPS</shortName>
        <ecNumber evidence="1">2.5.1.3</ecNumber>
    </recommendedName>
    <alternativeName>
        <fullName evidence="1">Thiamine-phosphate pyrophosphorylase</fullName>
        <shortName evidence="1">TMP pyrophosphorylase</shortName>
        <shortName evidence="1">TMP-PPase</shortName>
    </alternativeName>
</protein>